<gene>
    <name evidence="1" type="primary">pdxT</name>
    <name type="ordered locus">BAD_1406</name>
</gene>
<evidence type="ECO:0000255" key="1">
    <source>
        <dbReference type="HAMAP-Rule" id="MF_01615"/>
    </source>
</evidence>
<evidence type="ECO:0000305" key="2"/>
<comment type="function">
    <text evidence="1">Catalyzes the hydrolysis of glutamine to glutamate and ammonia as part of the biosynthesis of pyridoxal 5'-phosphate. The resulting ammonia molecule is channeled to the active site of PdxS.</text>
</comment>
<comment type="catalytic activity">
    <reaction evidence="1">
        <text>aldehydo-D-ribose 5-phosphate + D-glyceraldehyde 3-phosphate + L-glutamine = pyridoxal 5'-phosphate + L-glutamate + phosphate + 3 H2O + H(+)</text>
        <dbReference type="Rhea" id="RHEA:31507"/>
        <dbReference type="ChEBI" id="CHEBI:15377"/>
        <dbReference type="ChEBI" id="CHEBI:15378"/>
        <dbReference type="ChEBI" id="CHEBI:29985"/>
        <dbReference type="ChEBI" id="CHEBI:43474"/>
        <dbReference type="ChEBI" id="CHEBI:58273"/>
        <dbReference type="ChEBI" id="CHEBI:58359"/>
        <dbReference type="ChEBI" id="CHEBI:59776"/>
        <dbReference type="ChEBI" id="CHEBI:597326"/>
        <dbReference type="EC" id="4.3.3.6"/>
    </reaction>
</comment>
<comment type="catalytic activity">
    <reaction evidence="1">
        <text>L-glutamine + H2O = L-glutamate + NH4(+)</text>
        <dbReference type="Rhea" id="RHEA:15889"/>
        <dbReference type="ChEBI" id="CHEBI:15377"/>
        <dbReference type="ChEBI" id="CHEBI:28938"/>
        <dbReference type="ChEBI" id="CHEBI:29985"/>
        <dbReference type="ChEBI" id="CHEBI:58359"/>
        <dbReference type="EC" id="3.5.1.2"/>
    </reaction>
</comment>
<comment type="pathway">
    <text evidence="1">Cofactor biosynthesis; pyridoxal 5'-phosphate biosynthesis.</text>
</comment>
<comment type="subunit">
    <text evidence="1">In the presence of PdxS, forms a dodecamer of heterodimers. Only shows activity in the heterodimer.</text>
</comment>
<comment type="similarity">
    <text evidence="1">Belongs to the glutaminase PdxT/SNO family.</text>
</comment>
<comment type="sequence caution" evidence="2">
    <conflict type="erroneous initiation">
        <sequence resource="EMBL-CDS" id="BAF40187"/>
    </conflict>
</comment>
<protein>
    <recommendedName>
        <fullName evidence="1">Pyridoxal 5'-phosphate synthase subunit PdxT</fullName>
        <ecNumber evidence="1">4.3.3.6</ecNumber>
    </recommendedName>
    <alternativeName>
        <fullName evidence="1">Pdx2</fullName>
    </alternativeName>
    <alternativeName>
        <fullName evidence="1">Pyridoxal 5'-phosphate synthase glutaminase subunit</fullName>
        <ecNumber evidence="1">3.5.1.2</ecNumber>
    </alternativeName>
</protein>
<accession>A1A3A4</accession>
<keyword id="KW-0315">Glutamine amidotransferase</keyword>
<keyword id="KW-0378">Hydrolase</keyword>
<keyword id="KW-0456">Lyase</keyword>
<keyword id="KW-0663">Pyridoxal phosphate</keyword>
<keyword id="KW-1185">Reference proteome</keyword>
<proteinExistence type="inferred from homology"/>
<feature type="chain" id="PRO_0000292994" description="Pyridoxal 5'-phosphate synthase subunit PdxT">
    <location>
        <begin position="1"/>
        <end position="208"/>
    </location>
</feature>
<feature type="active site" description="Nucleophile" evidence="1">
    <location>
        <position position="78"/>
    </location>
</feature>
<feature type="active site" description="Charge relay system" evidence="1">
    <location>
        <position position="192"/>
    </location>
</feature>
<feature type="active site" description="Charge relay system" evidence="1">
    <location>
        <position position="194"/>
    </location>
</feature>
<feature type="binding site" evidence="1">
    <location>
        <begin position="46"/>
        <end position="48"/>
    </location>
    <ligand>
        <name>L-glutamine</name>
        <dbReference type="ChEBI" id="CHEBI:58359"/>
    </ligand>
</feature>
<feature type="binding site" evidence="1">
    <location>
        <position position="105"/>
    </location>
    <ligand>
        <name>L-glutamine</name>
        <dbReference type="ChEBI" id="CHEBI:58359"/>
    </ligand>
</feature>
<feature type="binding site" evidence="1">
    <location>
        <begin position="156"/>
        <end position="157"/>
    </location>
    <ligand>
        <name>L-glutamine</name>
        <dbReference type="ChEBI" id="CHEBI:58359"/>
    </ligand>
</feature>
<dbReference type="EC" id="4.3.3.6" evidence="1"/>
<dbReference type="EC" id="3.5.1.2" evidence="1"/>
<dbReference type="EMBL" id="AP009256">
    <property type="protein sequence ID" value="BAF40187.1"/>
    <property type="status" value="ALT_INIT"/>
    <property type="molecule type" value="Genomic_DNA"/>
</dbReference>
<dbReference type="SMR" id="A1A3A4"/>
<dbReference type="STRING" id="367928.BAD_1406"/>
<dbReference type="PaxDb" id="1680-BADO_1625"/>
<dbReference type="KEGG" id="bad:BAD_1406"/>
<dbReference type="HOGENOM" id="CLU_069674_2_0_11"/>
<dbReference type="UniPathway" id="UPA00245"/>
<dbReference type="Proteomes" id="UP000008702">
    <property type="component" value="Chromosome"/>
</dbReference>
<dbReference type="GO" id="GO:0005829">
    <property type="term" value="C:cytosol"/>
    <property type="evidence" value="ECO:0007669"/>
    <property type="project" value="TreeGrafter"/>
</dbReference>
<dbReference type="GO" id="GO:1903600">
    <property type="term" value="C:glutaminase complex"/>
    <property type="evidence" value="ECO:0007669"/>
    <property type="project" value="TreeGrafter"/>
</dbReference>
<dbReference type="GO" id="GO:0004359">
    <property type="term" value="F:glutaminase activity"/>
    <property type="evidence" value="ECO:0007669"/>
    <property type="project" value="UniProtKB-UniRule"/>
</dbReference>
<dbReference type="GO" id="GO:0036381">
    <property type="term" value="F:pyridoxal 5'-phosphate synthase (glutamine hydrolysing) activity"/>
    <property type="evidence" value="ECO:0007669"/>
    <property type="project" value="UniProtKB-UniRule"/>
</dbReference>
<dbReference type="GO" id="GO:0006543">
    <property type="term" value="P:glutamine catabolic process"/>
    <property type="evidence" value="ECO:0007669"/>
    <property type="project" value="UniProtKB-UniRule"/>
</dbReference>
<dbReference type="GO" id="GO:0042823">
    <property type="term" value="P:pyridoxal phosphate biosynthetic process"/>
    <property type="evidence" value="ECO:0007669"/>
    <property type="project" value="UniProtKB-UniRule"/>
</dbReference>
<dbReference type="GO" id="GO:0008614">
    <property type="term" value="P:pyridoxine metabolic process"/>
    <property type="evidence" value="ECO:0007669"/>
    <property type="project" value="TreeGrafter"/>
</dbReference>
<dbReference type="CDD" id="cd01749">
    <property type="entry name" value="GATase1_PB"/>
    <property type="match status" value="1"/>
</dbReference>
<dbReference type="Gene3D" id="3.40.50.880">
    <property type="match status" value="1"/>
</dbReference>
<dbReference type="HAMAP" id="MF_01615">
    <property type="entry name" value="PdxT"/>
    <property type="match status" value="1"/>
</dbReference>
<dbReference type="InterPro" id="IPR029062">
    <property type="entry name" value="Class_I_gatase-like"/>
</dbReference>
<dbReference type="InterPro" id="IPR002161">
    <property type="entry name" value="PdxT/SNO"/>
</dbReference>
<dbReference type="InterPro" id="IPR021196">
    <property type="entry name" value="PdxT/SNO_CS"/>
</dbReference>
<dbReference type="NCBIfam" id="TIGR03800">
    <property type="entry name" value="PLP_synth_Pdx2"/>
    <property type="match status" value="1"/>
</dbReference>
<dbReference type="PANTHER" id="PTHR31559">
    <property type="entry name" value="PYRIDOXAL 5'-PHOSPHATE SYNTHASE SUBUNIT SNO"/>
    <property type="match status" value="1"/>
</dbReference>
<dbReference type="PANTHER" id="PTHR31559:SF0">
    <property type="entry name" value="PYRIDOXAL 5'-PHOSPHATE SYNTHASE SUBUNIT SNO1-RELATED"/>
    <property type="match status" value="1"/>
</dbReference>
<dbReference type="Pfam" id="PF01174">
    <property type="entry name" value="SNO"/>
    <property type="match status" value="1"/>
</dbReference>
<dbReference type="PIRSF" id="PIRSF005639">
    <property type="entry name" value="Glut_amidoT_SNO"/>
    <property type="match status" value="1"/>
</dbReference>
<dbReference type="SUPFAM" id="SSF52317">
    <property type="entry name" value="Class I glutamine amidotransferase-like"/>
    <property type="match status" value="1"/>
</dbReference>
<dbReference type="PROSITE" id="PS01236">
    <property type="entry name" value="PDXT_SNO_1"/>
    <property type="match status" value="1"/>
</dbReference>
<dbReference type="PROSITE" id="PS51130">
    <property type="entry name" value="PDXT_SNO_2"/>
    <property type="match status" value="1"/>
</dbReference>
<organism>
    <name type="scientific">Bifidobacterium adolescentis (strain ATCC 15703 / DSM 20083 / NCTC 11814 / E194a)</name>
    <dbReference type="NCBI Taxonomy" id="367928"/>
    <lineage>
        <taxon>Bacteria</taxon>
        <taxon>Bacillati</taxon>
        <taxon>Actinomycetota</taxon>
        <taxon>Actinomycetes</taxon>
        <taxon>Bifidobacteriales</taxon>
        <taxon>Bifidobacteriaceae</taxon>
        <taxon>Bifidobacterium</taxon>
    </lineage>
</organism>
<reference key="1">
    <citation type="submission" date="2006-12" db="EMBL/GenBank/DDBJ databases">
        <title>Bifidobacterium adolescentis complete genome sequence.</title>
        <authorList>
            <person name="Suzuki T."/>
            <person name="Tsuda Y."/>
            <person name="Kanou N."/>
            <person name="Inoue T."/>
            <person name="Kumazaki K."/>
            <person name="Nagano S."/>
            <person name="Hirai S."/>
            <person name="Tanaka K."/>
            <person name="Watanabe K."/>
        </authorList>
    </citation>
    <scope>NUCLEOTIDE SEQUENCE [LARGE SCALE GENOMIC DNA]</scope>
    <source>
        <strain>ATCC 15703 / DSM 20083 / NCTC 11814 / E194a</strain>
    </source>
</reference>
<name>PDXT_BIFAA</name>
<sequence length="208" mass="21937">MTGILAVQGAFAEHAAMLDHLGAPWKLLRAAEDFDDSIDRVILPGGESTTQGKLLRSTGLFEPIAEHIAAGKPVFGTCAGMILLARKLDNDDNVYFGALDAVVRRNAYGRQLGSFAATADFGSSSGDSAVVVAPGEHVPQDAPADIVLKDFPLVFIRGPFVAEVGPAATVETSVDGNVVGLRQGKILATAFHPELTDDTRIHELFLSL</sequence>